<keyword id="KW-0997">Cell inner membrane</keyword>
<keyword id="KW-1003">Cell membrane</keyword>
<keyword id="KW-0472">Membrane</keyword>
<keyword id="KW-0812">Transmembrane</keyword>
<keyword id="KW-1133">Transmembrane helix</keyword>
<reference key="1">
    <citation type="journal article" date="2009" name="PLoS Genet.">
        <title>Organised genome dynamics in the Escherichia coli species results in highly diverse adaptive paths.</title>
        <authorList>
            <person name="Touchon M."/>
            <person name="Hoede C."/>
            <person name="Tenaillon O."/>
            <person name="Barbe V."/>
            <person name="Baeriswyl S."/>
            <person name="Bidet P."/>
            <person name="Bingen E."/>
            <person name="Bonacorsi S."/>
            <person name="Bouchier C."/>
            <person name="Bouvet O."/>
            <person name="Calteau A."/>
            <person name="Chiapello H."/>
            <person name="Clermont O."/>
            <person name="Cruveiller S."/>
            <person name="Danchin A."/>
            <person name="Diard M."/>
            <person name="Dossat C."/>
            <person name="Karoui M.E."/>
            <person name="Frapy E."/>
            <person name="Garry L."/>
            <person name="Ghigo J.M."/>
            <person name="Gilles A.M."/>
            <person name="Johnson J."/>
            <person name="Le Bouguenec C."/>
            <person name="Lescat M."/>
            <person name="Mangenot S."/>
            <person name="Martinez-Jehanne V."/>
            <person name="Matic I."/>
            <person name="Nassif X."/>
            <person name="Oztas S."/>
            <person name="Petit M.A."/>
            <person name="Pichon C."/>
            <person name="Rouy Z."/>
            <person name="Ruf C.S."/>
            <person name="Schneider D."/>
            <person name="Tourret J."/>
            <person name="Vacherie B."/>
            <person name="Vallenet D."/>
            <person name="Medigue C."/>
            <person name="Rocha E.P.C."/>
            <person name="Denamur E."/>
        </authorList>
    </citation>
    <scope>NUCLEOTIDE SEQUENCE [LARGE SCALE GENOMIC DNA]</scope>
    <source>
        <strain>IAI39 / ExPEC</strain>
    </source>
</reference>
<gene>
    <name evidence="1" type="primary">yobD</name>
    <name type="ordered locus">ECIAI39_1232</name>
</gene>
<accession>B7NSA1</accession>
<feature type="chain" id="PRO_1000136637" description="UPF0266 membrane protein YobD">
    <location>
        <begin position="1"/>
        <end position="152"/>
    </location>
</feature>
<feature type="transmembrane region" description="Helical" evidence="1">
    <location>
        <begin position="6"/>
        <end position="26"/>
    </location>
</feature>
<feature type="transmembrane region" description="Helical" evidence="1">
    <location>
        <begin position="45"/>
        <end position="65"/>
    </location>
</feature>
<feature type="transmembrane region" description="Helical" evidence="1">
    <location>
        <begin position="67"/>
        <end position="87"/>
    </location>
</feature>
<protein>
    <recommendedName>
        <fullName evidence="1">UPF0266 membrane protein YobD</fullName>
    </recommendedName>
</protein>
<name>YOBD_ECO7I</name>
<evidence type="ECO:0000255" key="1">
    <source>
        <dbReference type="HAMAP-Rule" id="MF_01071"/>
    </source>
</evidence>
<organism>
    <name type="scientific">Escherichia coli O7:K1 (strain IAI39 / ExPEC)</name>
    <dbReference type="NCBI Taxonomy" id="585057"/>
    <lineage>
        <taxon>Bacteria</taxon>
        <taxon>Pseudomonadati</taxon>
        <taxon>Pseudomonadota</taxon>
        <taxon>Gammaproteobacteria</taxon>
        <taxon>Enterobacterales</taxon>
        <taxon>Enterobacteriaceae</taxon>
        <taxon>Escherichia</taxon>
    </lineage>
</organism>
<comment type="subcellular location">
    <subcellularLocation>
        <location evidence="1">Cell inner membrane</location>
        <topology evidence="1">Multi-pass membrane protein</topology>
    </subcellularLocation>
</comment>
<comment type="similarity">
    <text evidence="1">Belongs to the UPF0266 family.</text>
</comment>
<proteinExistence type="inferred from homology"/>
<dbReference type="EMBL" id="CU928164">
    <property type="protein sequence ID" value="CAR17366.1"/>
    <property type="molecule type" value="Genomic_DNA"/>
</dbReference>
<dbReference type="RefSeq" id="WP_000156255.1">
    <property type="nucleotide sequence ID" value="NC_011750.1"/>
</dbReference>
<dbReference type="RefSeq" id="YP_002407240.1">
    <property type="nucleotide sequence ID" value="NC_011750.1"/>
</dbReference>
<dbReference type="STRING" id="585057.ECIAI39_1232"/>
<dbReference type="KEGG" id="ect:ECIAI39_1232"/>
<dbReference type="PATRIC" id="fig|585057.6.peg.1290"/>
<dbReference type="HOGENOM" id="CLU_133645_0_0_6"/>
<dbReference type="Proteomes" id="UP000000749">
    <property type="component" value="Chromosome"/>
</dbReference>
<dbReference type="GO" id="GO:0005886">
    <property type="term" value="C:plasma membrane"/>
    <property type="evidence" value="ECO:0007669"/>
    <property type="project" value="UniProtKB-SubCell"/>
</dbReference>
<dbReference type="HAMAP" id="MF_01071">
    <property type="entry name" value="UPF0266"/>
    <property type="match status" value="1"/>
</dbReference>
<dbReference type="InterPro" id="IPR009328">
    <property type="entry name" value="DUF986"/>
</dbReference>
<dbReference type="NCBIfam" id="NF002791">
    <property type="entry name" value="PRK02913.1"/>
    <property type="match status" value="1"/>
</dbReference>
<dbReference type="Pfam" id="PF06173">
    <property type="entry name" value="DUF986"/>
    <property type="match status" value="1"/>
</dbReference>
<dbReference type="PIRSF" id="PIRSF020687">
    <property type="entry name" value="UCP020687"/>
    <property type="match status" value="1"/>
</dbReference>
<sequence length="152" mass="17615">MTITDLVLILFIAALLAFAIYDQFIMPRRNGPTLLAIPLLRRGRIDSVIFVGLIVILIYNNVTNHGALITTWLLSALALMGFYIFWIRVPKIIFKQKGFFFANVWIEYSRIKAMNLSEDGVLVMQLEQRRLLIRVRNIDDLEKIYKLLVSTQ</sequence>